<name>LCB2A_ORYSJ</name>
<sequence length="488" mass="53690">MVRLPYTTALTTLFSYGLLFAFGQLRDFFRKLIDWFKAKNVKGYAPICLGLEDFYVRRLYLRIQDCFGRPIASAPDAWFDVVERYSNDSNKTLKRTSNTTRCLNLGSYNYLGFAAADEYCTPLVIESLKKYSPSTCSVRVDGGTTKLHTELEELVARFVGKPAAILFGMGYVTNSAIIPCLVGKGGLIISDSLNHNSIVNGARGSGATVRVFQHNSPAHLEEVLREQIAGGQPRTHRPWKKIIVIVEGIYSMEGELCKLPEIIAVCKKYKAYTYLDEAHSIGAVGQSGRGVCELLGVDPADVDIMMGTFTKSFGSCGGYIAASKEIIQHLKLSCPAHIYATSMSPPAVQQVISAIKVILGEDGSNRGAQKLARIRENSNFFRSELKKMGFEVLGDNDSPVMPIMLYNPAKIPAFSRECLRQKVAVVTVAFPATPLLLARARICISASHTREDLIKALDVISRVGDLVGIKYFPAEPPKIAEADHDKLE</sequence>
<protein>
    <recommendedName>
        <fullName>Long chain base biosynthesis protein 2a</fullName>
        <ecNumber>2.3.1.50</ecNumber>
    </recommendedName>
</protein>
<keyword id="KW-0012">Acyltransferase</keyword>
<keyword id="KW-0256">Endoplasmic reticulum</keyword>
<keyword id="KW-0443">Lipid metabolism</keyword>
<keyword id="KW-0472">Membrane</keyword>
<keyword id="KW-0663">Pyridoxal phosphate</keyword>
<keyword id="KW-1185">Reference proteome</keyword>
<keyword id="KW-0746">Sphingolipid metabolism</keyword>
<keyword id="KW-0808">Transferase</keyword>
<keyword id="KW-0812">Transmembrane</keyword>
<keyword id="KW-1133">Transmembrane helix</keyword>
<gene>
    <name type="ordered locus">Os11g0516000</name>
    <name type="ordered locus">LOC_Os11g31640</name>
    <name type="ORF">OsJ_34042</name>
</gene>
<accession>Q2R3K3</accession>
<accession>A0A0P0Y2M2</accession>
<accession>B9GAX0</accession>
<dbReference type="EC" id="2.3.1.50"/>
<dbReference type="EMBL" id="DP000010">
    <property type="protein sequence ID" value="ABA93932.1"/>
    <property type="molecule type" value="Genomic_DNA"/>
</dbReference>
<dbReference type="EMBL" id="AP008217">
    <property type="protein sequence ID" value="BAF28335.1"/>
    <property type="molecule type" value="Genomic_DNA"/>
</dbReference>
<dbReference type="EMBL" id="AP014967">
    <property type="protein sequence ID" value="BAT14191.1"/>
    <property type="molecule type" value="Genomic_DNA"/>
</dbReference>
<dbReference type="EMBL" id="CM000148">
    <property type="protein sequence ID" value="EEE52176.1"/>
    <property type="status" value="ALT_SEQ"/>
    <property type="molecule type" value="Genomic_DNA"/>
</dbReference>
<dbReference type="EMBL" id="AK069007">
    <property type="status" value="NOT_ANNOTATED_CDS"/>
    <property type="molecule type" value="mRNA"/>
</dbReference>
<dbReference type="RefSeq" id="XP_015617901.1">
    <property type="nucleotide sequence ID" value="XM_015762415.1"/>
</dbReference>
<dbReference type="SMR" id="Q2R3K3"/>
<dbReference type="FunCoup" id="Q2R3K3">
    <property type="interactions" value="1966"/>
</dbReference>
<dbReference type="STRING" id="39947.Q2R3K3"/>
<dbReference type="PaxDb" id="39947-Q2R3K3"/>
<dbReference type="EnsemblPlants" id="Os11t0516000-01">
    <property type="protein sequence ID" value="Os11t0516000-01"/>
    <property type="gene ID" value="Os11g0516000"/>
</dbReference>
<dbReference type="Gramene" id="Os11t0516000-01">
    <property type="protein sequence ID" value="Os11t0516000-01"/>
    <property type="gene ID" value="Os11g0516000"/>
</dbReference>
<dbReference type="KEGG" id="dosa:Os11g0516000"/>
<dbReference type="eggNOG" id="KOG1357">
    <property type="taxonomic scope" value="Eukaryota"/>
</dbReference>
<dbReference type="HOGENOM" id="CLU_015846_7_0_1"/>
<dbReference type="InParanoid" id="Q2R3K3"/>
<dbReference type="OMA" id="MFGSNAY"/>
<dbReference type="OrthoDB" id="65434at2759"/>
<dbReference type="PlantReactome" id="R-OSA-1119325">
    <property type="pathway name" value="Sphingolipid metabolism"/>
</dbReference>
<dbReference type="PlantReactome" id="R-OSA-1119610">
    <property type="pathway name" value="Biotin biosynthesis II"/>
</dbReference>
<dbReference type="UniPathway" id="UPA00222"/>
<dbReference type="Proteomes" id="UP000000763">
    <property type="component" value="Chromosome 11"/>
</dbReference>
<dbReference type="Proteomes" id="UP000007752">
    <property type="component" value="Chromosome 11"/>
</dbReference>
<dbReference type="Proteomes" id="UP000059680">
    <property type="component" value="Chromosome 11"/>
</dbReference>
<dbReference type="GO" id="GO:0005789">
    <property type="term" value="C:endoplasmic reticulum membrane"/>
    <property type="evidence" value="ECO:0007669"/>
    <property type="project" value="UniProtKB-SubCell"/>
</dbReference>
<dbReference type="GO" id="GO:0017059">
    <property type="term" value="C:serine palmitoyltransferase complex"/>
    <property type="evidence" value="ECO:0000318"/>
    <property type="project" value="GO_Central"/>
</dbReference>
<dbReference type="GO" id="GO:0030170">
    <property type="term" value="F:pyridoxal phosphate binding"/>
    <property type="evidence" value="ECO:0007669"/>
    <property type="project" value="InterPro"/>
</dbReference>
<dbReference type="GO" id="GO:0004758">
    <property type="term" value="F:serine C-palmitoyltransferase activity"/>
    <property type="evidence" value="ECO:0000318"/>
    <property type="project" value="GO_Central"/>
</dbReference>
<dbReference type="GO" id="GO:0046513">
    <property type="term" value="P:ceramide biosynthetic process"/>
    <property type="evidence" value="ECO:0000318"/>
    <property type="project" value="GO_Central"/>
</dbReference>
<dbReference type="GO" id="GO:0046512">
    <property type="term" value="P:sphingosine biosynthetic process"/>
    <property type="evidence" value="ECO:0000318"/>
    <property type="project" value="GO_Central"/>
</dbReference>
<dbReference type="CDD" id="cd06454">
    <property type="entry name" value="KBL_like"/>
    <property type="match status" value="1"/>
</dbReference>
<dbReference type="FunFam" id="3.90.1150.10:FF:000004">
    <property type="entry name" value="2-amino-3-ketobutyrate coenzyme A ligase"/>
    <property type="match status" value="1"/>
</dbReference>
<dbReference type="Gene3D" id="3.90.1150.10">
    <property type="entry name" value="Aspartate Aminotransferase, domain 1"/>
    <property type="match status" value="1"/>
</dbReference>
<dbReference type="Gene3D" id="3.40.640.10">
    <property type="entry name" value="Type I PLP-dependent aspartate aminotransferase-like (Major domain)"/>
    <property type="match status" value="1"/>
</dbReference>
<dbReference type="InterPro" id="IPR001917">
    <property type="entry name" value="Aminotrans_II_pyridoxalP_BS"/>
</dbReference>
<dbReference type="InterPro" id="IPR004839">
    <property type="entry name" value="Aminotransferase_I/II_large"/>
</dbReference>
<dbReference type="InterPro" id="IPR050087">
    <property type="entry name" value="AON_synthase_class-II"/>
</dbReference>
<dbReference type="InterPro" id="IPR015424">
    <property type="entry name" value="PyrdxlP-dep_Trfase"/>
</dbReference>
<dbReference type="InterPro" id="IPR015421">
    <property type="entry name" value="PyrdxlP-dep_Trfase_major"/>
</dbReference>
<dbReference type="InterPro" id="IPR015422">
    <property type="entry name" value="PyrdxlP-dep_Trfase_small"/>
</dbReference>
<dbReference type="PANTHER" id="PTHR13693">
    <property type="entry name" value="CLASS II AMINOTRANSFERASE/8-AMINO-7-OXONONANOATE SYNTHASE"/>
    <property type="match status" value="1"/>
</dbReference>
<dbReference type="PANTHER" id="PTHR13693:SF3">
    <property type="entry name" value="LD36009P"/>
    <property type="match status" value="1"/>
</dbReference>
<dbReference type="Pfam" id="PF00155">
    <property type="entry name" value="Aminotran_1_2"/>
    <property type="match status" value="1"/>
</dbReference>
<dbReference type="SUPFAM" id="SSF53383">
    <property type="entry name" value="PLP-dependent transferases"/>
    <property type="match status" value="1"/>
</dbReference>
<dbReference type="PROSITE" id="PS00599">
    <property type="entry name" value="AA_TRANSFER_CLASS_2"/>
    <property type="match status" value="1"/>
</dbReference>
<evidence type="ECO:0000250" key="1"/>
<evidence type="ECO:0000255" key="2"/>
<evidence type="ECO:0000305" key="3"/>
<reference key="1">
    <citation type="journal article" date="2005" name="BMC Biol.">
        <title>The sequence of rice chromosomes 11 and 12, rich in disease resistance genes and recent gene duplications.</title>
        <authorList>
            <consortium name="The rice chromosomes 11 and 12 sequencing consortia"/>
        </authorList>
    </citation>
    <scope>NUCLEOTIDE SEQUENCE [LARGE SCALE GENOMIC DNA]</scope>
    <source>
        <strain>cv. Nipponbare</strain>
    </source>
</reference>
<reference key="2">
    <citation type="journal article" date="2005" name="Nature">
        <title>The map-based sequence of the rice genome.</title>
        <authorList>
            <consortium name="International rice genome sequencing project (IRGSP)"/>
        </authorList>
    </citation>
    <scope>NUCLEOTIDE SEQUENCE [LARGE SCALE GENOMIC DNA]</scope>
    <source>
        <strain>cv. Nipponbare</strain>
    </source>
</reference>
<reference key="3">
    <citation type="journal article" date="2008" name="Nucleic Acids Res.">
        <title>The rice annotation project database (RAP-DB): 2008 update.</title>
        <authorList>
            <consortium name="The rice annotation project (RAP)"/>
        </authorList>
    </citation>
    <scope>GENOME REANNOTATION</scope>
    <source>
        <strain>cv. Nipponbare</strain>
    </source>
</reference>
<reference key="4">
    <citation type="journal article" date="2013" name="Rice">
        <title>Improvement of the Oryza sativa Nipponbare reference genome using next generation sequence and optical map data.</title>
        <authorList>
            <person name="Kawahara Y."/>
            <person name="de la Bastide M."/>
            <person name="Hamilton J.P."/>
            <person name="Kanamori H."/>
            <person name="McCombie W.R."/>
            <person name="Ouyang S."/>
            <person name="Schwartz D.C."/>
            <person name="Tanaka T."/>
            <person name="Wu J."/>
            <person name="Zhou S."/>
            <person name="Childs K.L."/>
            <person name="Davidson R.M."/>
            <person name="Lin H."/>
            <person name="Quesada-Ocampo L."/>
            <person name="Vaillancourt B."/>
            <person name="Sakai H."/>
            <person name="Lee S.S."/>
            <person name="Kim J."/>
            <person name="Numa H."/>
            <person name="Itoh T."/>
            <person name="Buell C.R."/>
            <person name="Matsumoto T."/>
        </authorList>
    </citation>
    <scope>GENOME REANNOTATION</scope>
    <source>
        <strain>cv. Nipponbare</strain>
    </source>
</reference>
<reference key="5">
    <citation type="journal article" date="2005" name="PLoS Biol.">
        <title>The genomes of Oryza sativa: a history of duplications.</title>
        <authorList>
            <person name="Yu J."/>
            <person name="Wang J."/>
            <person name="Lin W."/>
            <person name="Li S."/>
            <person name="Li H."/>
            <person name="Zhou J."/>
            <person name="Ni P."/>
            <person name="Dong W."/>
            <person name="Hu S."/>
            <person name="Zeng C."/>
            <person name="Zhang J."/>
            <person name="Zhang Y."/>
            <person name="Li R."/>
            <person name="Xu Z."/>
            <person name="Li S."/>
            <person name="Li X."/>
            <person name="Zheng H."/>
            <person name="Cong L."/>
            <person name="Lin L."/>
            <person name="Yin J."/>
            <person name="Geng J."/>
            <person name="Li G."/>
            <person name="Shi J."/>
            <person name="Liu J."/>
            <person name="Lv H."/>
            <person name="Li J."/>
            <person name="Wang J."/>
            <person name="Deng Y."/>
            <person name="Ran L."/>
            <person name="Shi X."/>
            <person name="Wang X."/>
            <person name="Wu Q."/>
            <person name="Li C."/>
            <person name="Ren X."/>
            <person name="Wang J."/>
            <person name="Wang X."/>
            <person name="Li D."/>
            <person name="Liu D."/>
            <person name="Zhang X."/>
            <person name="Ji Z."/>
            <person name="Zhao W."/>
            <person name="Sun Y."/>
            <person name="Zhang Z."/>
            <person name="Bao J."/>
            <person name="Han Y."/>
            <person name="Dong L."/>
            <person name="Ji J."/>
            <person name="Chen P."/>
            <person name="Wu S."/>
            <person name="Liu J."/>
            <person name="Xiao Y."/>
            <person name="Bu D."/>
            <person name="Tan J."/>
            <person name="Yang L."/>
            <person name="Ye C."/>
            <person name="Zhang J."/>
            <person name="Xu J."/>
            <person name="Zhou Y."/>
            <person name="Yu Y."/>
            <person name="Zhang B."/>
            <person name="Zhuang S."/>
            <person name="Wei H."/>
            <person name="Liu B."/>
            <person name="Lei M."/>
            <person name="Yu H."/>
            <person name="Li Y."/>
            <person name="Xu H."/>
            <person name="Wei S."/>
            <person name="He X."/>
            <person name="Fang L."/>
            <person name="Zhang Z."/>
            <person name="Zhang Y."/>
            <person name="Huang X."/>
            <person name="Su Z."/>
            <person name="Tong W."/>
            <person name="Li J."/>
            <person name="Tong Z."/>
            <person name="Li S."/>
            <person name="Ye J."/>
            <person name="Wang L."/>
            <person name="Fang L."/>
            <person name="Lei T."/>
            <person name="Chen C.-S."/>
            <person name="Chen H.-C."/>
            <person name="Xu Z."/>
            <person name="Li H."/>
            <person name="Huang H."/>
            <person name="Zhang F."/>
            <person name="Xu H."/>
            <person name="Li N."/>
            <person name="Zhao C."/>
            <person name="Li S."/>
            <person name="Dong L."/>
            <person name="Huang Y."/>
            <person name="Li L."/>
            <person name="Xi Y."/>
            <person name="Qi Q."/>
            <person name="Li W."/>
            <person name="Zhang B."/>
            <person name="Hu W."/>
            <person name="Zhang Y."/>
            <person name="Tian X."/>
            <person name="Jiao Y."/>
            <person name="Liang X."/>
            <person name="Jin J."/>
            <person name="Gao L."/>
            <person name="Zheng W."/>
            <person name="Hao B."/>
            <person name="Liu S.-M."/>
            <person name="Wang W."/>
            <person name="Yuan L."/>
            <person name="Cao M."/>
            <person name="McDermott J."/>
            <person name="Samudrala R."/>
            <person name="Wang J."/>
            <person name="Wong G.K.-S."/>
            <person name="Yang H."/>
        </authorList>
    </citation>
    <scope>NUCLEOTIDE SEQUENCE [LARGE SCALE GENOMIC DNA]</scope>
    <source>
        <strain>cv. Nipponbare</strain>
    </source>
</reference>
<reference key="6">
    <citation type="journal article" date="2003" name="Science">
        <title>Collection, mapping, and annotation of over 28,000 cDNA clones from japonica rice.</title>
        <authorList>
            <consortium name="The rice full-length cDNA consortium"/>
        </authorList>
    </citation>
    <scope>NUCLEOTIDE SEQUENCE [LARGE SCALE MRNA]</scope>
    <source>
        <strain>cv. Nipponbare</strain>
    </source>
</reference>
<feature type="chain" id="PRO_0000419150" description="Long chain base biosynthesis protein 2a">
    <location>
        <begin position="1"/>
        <end position="488"/>
    </location>
</feature>
<feature type="transmembrane region" description="Helical" evidence="2">
    <location>
        <begin position="4"/>
        <end position="24"/>
    </location>
</feature>
<feature type="modified residue" description="N6-(pyridoxal phosphate)lysine" evidence="1">
    <location>
        <position position="311"/>
    </location>
</feature>
<feature type="sequence conflict" description="In Ref. 6; AK069007." evidence="3" ref="6">
    <original>R</original>
    <variation>W</variation>
    <location>
        <position position="289"/>
    </location>
</feature>
<proteinExistence type="evidence at transcript level"/>
<comment type="function">
    <text evidence="1">Serine palmitoyltransferase (SPT). The heterodimer formed with LCB1 constitutes the catalytic core (By similarity).</text>
</comment>
<comment type="catalytic activity">
    <reaction>
        <text>L-serine + hexadecanoyl-CoA + H(+) = 3-oxosphinganine + CO2 + CoA</text>
        <dbReference type="Rhea" id="RHEA:14761"/>
        <dbReference type="ChEBI" id="CHEBI:15378"/>
        <dbReference type="ChEBI" id="CHEBI:16526"/>
        <dbReference type="ChEBI" id="CHEBI:33384"/>
        <dbReference type="ChEBI" id="CHEBI:57287"/>
        <dbReference type="ChEBI" id="CHEBI:57379"/>
        <dbReference type="ChEBI" id="CHEBI:58299"/>
        <dbReference type="EC" id="2.3.1.50"/>
    </reaction>
</comment>
<comment type="cofactor">
    <cofactor evidence="1">
        <name>pyridoxal 5'-phosphate</name>
        <dbReference type="ChEBI" id="CHEBI:597326"/>
    </cofactor>
</comment>
<comment type="pathway">
    <text>Lipid metabolism; sphingolipid metabolism.</text>
</comment>
<comment type="subunit">
    <text evidence="1">Heterodimer with LCB1. Component of the serine palmitoyltransferase (SPT) complex, composed of LCB1 and LCB2 (By similarity).</text>
</comment>
<comment type="subcellular location">
    <subcellularLocation>
        <location evidence="1">Endoplasmic reticulum membrane</location>
        <topology evidence="1">Single-pass membrane protein</topology>
    </subcellularLocation>
</comment>
<comment type="similarity">
    <text evidence="3">Belongs to the class-II pyridoxal-phosphate-dependent aminotransferase family.</text>
</comment>
<comment type="sequence caution" evidence="3">
    <conflict type="erroneous gene model prediction">
        <sequence resource="EMBL-CDS" id="EEE52176"/>
    </conflict>
</comment>
<organism>
    <name type="scientific">Oryza sativa subsp. japonica</name>
    <name type="common">Rice</name>
    <dbReference type="NCBI Taxonomy" id="39947"/>
    <lineage>
        <taxon>Eukaryota</taxon>
        <taxon>Viridiplantae</taxon>
        <taxon>Streptophyta</taxon>
        <taxon>Embryophyta</taxon>
        <taxon>Tracheophyta</taxon>
        <taxon>Spermatophyta</taxon>
        <taxon>Magnoliopsida</taxon>
        <taxon>Liliopsida</taxon>
        <taxon>Poales</taxon>
        <taxon>Poaceae</taxon>
        <taxon>BOP clade</taxon>
        <taxon>Oryzoideae</taxon>
        <taxon>Oryzeae</taxon>
        <taxon>Oryzinae</taxon>
        <taxon>Oryza</taxon>
        <taxon>Oryza sativa</taxon>
    </lineage>
</organism>